<name>KXD1_ZYGRC</name>
<dbReference type="EMBL" id="CU928179">
    <property type="protein sequence ID" value="CAR29434.1"/>
    <property type="molecule type" value="Genomic_DNA"/>
</dbReference>
<dbReference type="RefSeq" id="XP_002498367.1">
    <property type="nucleotide sequence ID" value="XM_002498322.1"/>
</dbReference>
<dbReference type="SMR" id="C5E000"/>
<dbReference type="FunCoup" id="C5E000">
    <property type="interactions" value="104"/>
</dbReference>
<dbReference type="STRING" id="559307.C5E000"/>
<dbReference type="GeneID" id="8206170"/>
<dbReference type="KEGG" id="zro:ZYRO0G08536g"/>
<dbReference type="HOGENOM" id="CLU_099155_0_0_1"/>
<dbReference type="InParanoid" id="C5E000"/>
<dbReference type="Proteomes" id="UP000008536">
    <property type="component" value="Chromosome G"/>
</dbReference>
<dbReference type="GO" id="GO:0031083">
    <property type="term" value="C:BLOC-1 complex"/>
    <property type="evidence" value="ECO:0007669"/>
    <property type="project" value="TreeGrafter"/>
</dbReference>
<dbReference type="GO" id="GO:0005768">
    <property type="term" value="C:endosome"/>
    <property type="evidence" value="ECO:0007669"/>
    <property type="project" value="UniProtKB-SubCell"/>
</dbReference>
<dbReference type="GO" id="GO:0007032">
    <property type="term" value="P:endosome organization"/>
    <property type="evidence" value="ECO:0007669"/>
    <property type="project" value="TreeGrafter"/>
</dbReference>
<dbReference type="GO" id="GO:0032880">
    <property type="term" value="P:regulation of protein localization"/>
    <property type="evidence" value="ECO:0007669"/>
    <property type="project" value="TreeGrafter"/>
</dbReference>
<dbReference type="InterPro" id="IPR051390">
    <property type="entry name" value="BLOC-1_subunit_KXD1"/>
</dbReference>
<dbReference type="InterPro" id="IPR019371">
    <property type="entry name" value="KxDL_dom"/>
</dbReference>
<dbReference type="PANTHER" id="PTHR37787">
    <property type="entry name" value="BIOGENESIS OF LYSOSOME-RELATED ORGANELLES COMPLEX 1 SUBUNIT KXD1"/>
    <property type="match status" value="1"/>
</dbReference>
<dbReference type="PANTHER" id="PTHR37787:SF1">
    <property type="entry name" value="BIOGENESIS OF LYSOSOME-RELATED ORGANELLES COMPLEX 1 SUBUNIT KXD1"/>
    <property type="match status" value="1"/>
</dbReference>
<dbReference type="Pfam" id="PF10241">
    <property type="entry name" value="KxDL"/>
    <property type="match status" value="1"/>
</dbReference>
<keyword id="KW-0967">Endosome</keyword>
<keyword id="KW-1185">Reference proteome</keyword>
<keyword id="KW-0813">Transport</keyword>
<sequence length="195" mass="22018">MDDSSSEARAGIENDTTVRSRSPSVDSQSYAIPMPEEIEEQLSEESSSFDDSNSVESNEDQILGRALPESGQHAFSQDSQEFEPMLDVSKHIFDSLMQAIDSADFSEAISLQTKTSAVINSKSTELKQLIDETKVRFSQFKERFEKGSLTAKNIRGNLRYSKDKIEKINALVRTSYPIEFNEAREKILERPLDDH</sequence>
<accession>C5E000</accession>
<comment type="function">
    <text evidence="1">Component of the biogenesis of lysosome-related organelles complex-1 (BLOC-1) involved in endosomal cargo sorting.</text>
</comment>
<comment type="subunit">
    <text evidence="1">Component of the biogenesis of lysosome-related organelles complex-1 (BLOC-1).</text>
</comment>
<comment type="subcellular location">
    <subcellularLocation>
        <location evidence="1">Endosome</location>
    </subcellularLocation>
</comment>
<comment type="similarity">
    <text evidence="3">Belongs to the KXD1 family.</text>
</comment>
<evidence type="ECO:0000250" key="1"/>
<evidence type="ECO:0000256" key="2">
    <source>
        <dbReference type="SAM" id="MobiDB-lite"/>
    </source>
</evidence>
<evidence type="ECO:0000305" key="3"/>
<protein>
    <recommendedName>
        <fullName>Biogenesis of lysosome-related organelles complex 1 subunit KXD1</fullName>
        <shortName>BLOC-1 subunit KXD1</shortName>
    </recommendedName>
    <alternativeName>
        <fullName>KxDL homolog</fullName>
    </alternativeName>
</protein>
<gene>
    <name type="primary">KXD1</name>
    <name type="ordered locus">ZYRO0G08536g</name>
</gene>
<feature type="chain" id="PRO_0000410679" description="Biogenesis of lysosome-related organelles complex 1 subunit KXD1">
    <location>
        <begin position="1"/>
        <end position="195"/>
    </location>
</feature>
<feature type="region of interest" description="Disordered" evidence="2">
    <location>
        <begin position="1"/>
        <end position="80"/>
    </location>
</feature>
<feature type="compositionally biased region" description="Polar residues" evidence="2">
    <location>
        <begin position="19"/>
        <end position="30"/>
    </location>
</feature>
<feature type="compositionally biased region" description="Low complexity" evidence="2">
    <location>
        <begin position="44"/>
        <end position="56"/>
    </location>
</feature>
<proteinExistence type="inferred from homology"/>
<organism>
    <name type="scientific">Zygosaccharomyces rouxii (strain ATCC 2623 / CBS 732 / NBRC 1130 / NCYC 568 / NRRL Y-229)</name>
    <dbReference type="NCBI Taxonomy" id="559307"/>
    <lineage>
        <taxon>Eukaryota</taxon>
        <taxon>Fungi</taxon>
        <taxon>Dikarya</taxon>
        <taxon>Ascomycota</taxon>
        <taxon>Saccharomycotina</taxon>
        <taxon>Saccharomycetes</taxon>
        <taxon>Saccharomycetales</taxon>
        <taxon>Saccharomycetaceae</taxon>
        <taxon>Zygosaccharomyces</taxon>
    </lineage>
</organism>
<reference key="1">
    <citation type="journal article" date="2009" name="Genome Res.">
        <title>Comparative genomics of protoploid Saccharomycetaceae.</title>
        <authorList>
            <consortium name="The Genolevures Consortium"/>
            <person name="Souciet J.-L."/>
            <person name="Dujon B."/>
            <person name="Gaillardin C."/>
            <person name="Johnston M."/>
            <person name="Baret P.V."/>
            <person name="Cliften P."/>
            <person name="Sherman D.J."/>
            <person name="Weissenbach J."/>
            <person name="Westhof E."/>
            <person name="Wincker P."/>
            <person name="Jubin C."/>
            <person name="Poulain J."/>
            <person name="Barbe V."/>
            <person name="Segurens B."/>
            <person name="Artiguenave F."/>
            <person name="Anthouard V."/>
            <person name="Vacherie B."/>
            <person name="Val M.-E."/>
            <person name="Fulton R.S."/>
            <person name="Minx P."/>
            <person name="Wilson R."/>
            <person name="Durrens P."/>
            <person name="Jean G."/>
            <person name="Marck C."/>
            <person name="Martin T."/>
            <person name="Nikolski M."/>
            <person name="Rolland T."/>
            <person name="Seret M.-L."/>
            <person name="Casaregola S."/>
            <person name="Despons L."/>
            <person name="Fairhead C."/>
            <person name="Fischer G."/>
            <person name="Lafontaine I."/>
            <person name="Leh V."/>
            <person name="Lemaire M."/>
            <person name="de Montigny J."/>
            <person name="Neuveglise C."/>
            <person name="Thierry A."/>
            <person name="Blanc-Lenfle I."/>
            <person name="Bleykasten C."/>
            <person name="Diffels J."/>
            <person name="Fritsch E."/>
            <person name="Frangeul L."/>
            <person name="Goeffon A."/>
            <person name="Jauniaux N."/>
            <person name="Kachouri-Lafond R."/>
            <person name="Payen C."/>
            <person name="Potier S."/>
            <person name="Pribylova L."/>
            <person name="Ozanne C."/>
            <person name="Richard G.-F."/>
            <person name="Sacerdot C."/>
            <person name="Straub M.-L."/>
            <person name="Talla E."/>
        </authorList>
    </citation>
    <scope>NUCLEOTIDE SEQUENCE [LARGE SCALE GENOMIC DNA]</scope>
    <source>
        <strain>ATCC 2623 / CBS 732 / BCRC 21506 / NBRC 1130 / NCYC 568 / NRRL Y-229</strain>
    </source>
</reference>